<proteinExistence type="evidence at protein level"/>
<keyword id="KW-0002">3D-structure</keyword>
<keyword id="KW-0067">ATP-binding</keyword>
<keyword id="KW-0237">DNA synthesis</keyword>
<keyword id="KW-0418">Kinase</keyword>
<keyword id="KW-0547">Nucleotide-binding</keyword>
<keyword id="KW-0597">Phosphoprotein</keyword>
<keyword id="KW-1185">Reference proteome</keyword>
<keyword id="KW-0808">Transferase</keyword>
<dbReference type="EC" id="2.7.1.145" evidence="3 4 5 8"/>
<dbReference type="EMBL" id="AF045610">
    <property type="protein sequence ID" value="AAD47355.2"/>
    <property type="molecule type" value="mRNA"/>
</dbReference>
<dbReference type="EMBL" id="AF185268">
    <property type="protein sequence ID" value="AAD56545.1"/>
    <property type="molecule type" value="Genomic_DNA"/>
</dbReference>
<dbReference type="EMBL" id="Y18048">
    <property type="protein sequence ID" value="CAB41881.1"/>
    <property type="molecule type" value="mRNA"/>
</dbReference>
<dbReference type="EMBL" id="AE014297">
    <property type="protein sequence ID" value="AAF55615.1"/>
    <property type="molecule type" value="Genomic_DNA"/>
</dbReference>
<dbReference type="RefSeq" id="NP_001262722.1">
    <property type="nucleotide sequence ID" value="NM_001275793.1"/>
</dbReference>
<dbReference type="RefSeq" id="NP_524399.1">
    <property type="nucleotide sequence ID" value="NM_079675.3"/>
</dbReference>
<dbReference type="PDB" id="1J90">
    <property type="method" value="X-ray"/>
    <property type="resolution" value="2.56 A"/>
    <property type="chains" value="A/B=1-230"/>
</dbReference>
<dbReference type="PDB" id="1OE0">
    <property type="method" value="X-ray"/>
    <property type="resolution" value="2.40 A"/>
    <property type="chains" value="A/B/C/D=1-230"/>
</dbReference>
<dbReference type="PDB" id="1OT3">
    <property type="method" value="X-ray"/>
    <property type="resolution" value="2.50 A"/>
    <property type="chains" value="A/B/C/D/E/F/G/H=1-250"/>
</dbReference>
<dbReference type="PDB" id="1ZM7">
    <property type="method" value="X-ray"/>
    <property type="resolution" value="2.20 A"/>
    <property type="chains" value="A/B/C/D=1-230"/>
</dbReference>
<dbReference type="PDB" id="1ZMX">
    <property type="method" value="X-ray"/>
    <property type="resolution" value="3.10 A"/>
    <property type="chains" value="A/B/C/D/E/F/G/H=1-230"/>
</dbReference>
<dbReference type="PDB" id="2JCS">
    <property type="method" value="X-ray"/>
    <property type="resolution" value="2.50 A"/>
    <property type="chains" value="A/B=1-230"/>
</dbReference>
<dbReference type="PDB" id="2JJ8">
    <property type="method" value="X-ray"/>
    <property type="resolution" value="2.80 A"/>
    <property type="chains" value="A/B/C/D=1-230"/>
</dbReference>
<dbReference type="PDB" id="2VP0">
    <property type="method" value="X-ray"/>
    <property type="resolution" value="2.20 A"/>
    <property type="chains" value="A/B=1-250"/>
</dbReference>
<dbReference type="PDB" id="2VP2">
    <property type="method" value="X-ray"/>
    <property type="resolution" value="2.50 A"/>
    <property type="chains" value="A/B=1-230"/>
</dbReference>
<dbReference type="PDB" id="2VP4">
    <property type="method" value="X-ray"/>
    <property type="resolution" value="2.20 A"/>
    <property type="chains" value="A/B/C/D=1-230"/>
</dbReference>
<dbReference type="PDB" id="2VP5">
    <property type="method" value="X-ray"/>
    <property type="resolution" value="2.30 A"/>
    <property type="chains" value="A/B=1-230"/>
</dbReference>
<dbReference type="PDB" id="2VP6">
    <property type="method" value="X-ray"/>
    <property type="resolution" value="3.00 A"/>
    <property type="chains" value="A/B/C/D/E/F/G/H=1-230"/>
</dbReference>
<dbReference type="PDB" id="2VP9">
    <property type="method" value="X-ray"/>
    <property type="resolution" value="2.90 A"/>
    <property type="chains" value="A/B/C/D/E/F/G/H=1-230"/>
</dbReference>
<dbReference type="PDB" id="2VPP">
    <property type="method" value="X-ray"/>
    <property type="resolution" value="2.20 A"/>
    <property type="chains" value="A/B=1-230"/>
</dbReference>
<dbReference type="PDB" id="2VQS">
    <property type="method" value="X-ray"/>
    <property type="resolution" value="2.90 A"/>
    <property type="chains" value="A/B/C/D=1-230"/>
</dbReference>
<dbReference type="PDB" id="6YBH">
    <property type="method" value="X-ray"/>
    <property type="resolution" value="2.40 A"/>
    <property type="chains" value="A/B/C/D/E/F=13-235"/>
</dbReference>
<dbReference type="PDBsum" id="1J90"/>
<dbReference type="PDBsum" id="1OE0"/>
<dbReference type="PDBsum" id="1OT3"/>
<dbReference type="PDBsum" id="1ZM7"/>
<dbReference type="PDBsum" id="1ZMX"/>
<dbReference type="PDBsum" id="2JCS"/>
<dbReference type="PDBsum" id="2JJ8"/>
<dbReference type="PDBsum" id="2VP0"/>
<dbReference type="PDBsum" id="2VP2"/>
<dbReference type="PDBsum" id="2VP4"/>
<dbReference type="PDBsum" id="2VP5"/>
<dbReference type="PDBsum" id="2VP6"/>
<dbReference type="PDBsum" id="2VP9"/>
<dbReference type="PDBsum" id="2VPP"/>
<dbReference type="PDBsum" id="2VQS"/>
<dbReference type="PDBsum" id="6YBH"/>
<dbReference type="SMR" id="Q9XZT6"/>
<dbReference type="BioGRID" id="67276">
    <property type="interactions" value="10"/>
</dbReference>
<dbReference type="DIP" id="DIP-23491N"/>
<dbReference type="FunCoup" id="Q9XZT6">
    <property type="interactions" value="1054"/>
</dbReference>
<dbReference type="IntAct" id="Q9XZT6">
    <property type="interactions" value="7"/>
</dbReference>
<dbReference type="STRING" id="7227.FBpp0302815"/>
<dbReference type="BindingDB" id="Q9XZT6"/>
<dbReference type="ChEMBL" id="CHEMBL4760"/>
<dbReference type="DrugCentral" id="Q9XZT6"/>
<dbReference type="iPTMnet" id="Q9XZT6"/>
<dbReference type="PaxDb" id="7227-FBpp0302815"/>
<dbReference type="DNASU" id="42273"/>
<dbReference type="EnsemblMetazoa" id="FBtr0083707">
    <property type="protein sequence ID" value="FBpp0083121"/>
    <property type="gene ID" value="FBgn0022338"/>
</dbReference>
<dbReference type="EnsemblMetazoa" id="FBtr0321263">
    <property type="protein sequence ID" value="FBpp0302815"/>
    <property type="gene ID" value="FBgn0022338"/>
</dbReference>
<dbReference type="GeneID" id="42273"/>
<dbReference type="KEGG" id="dme:Dmel_CG5452"/>
<dbReference type="AGR" id="FB:FBgn0022338"/>
<dbReference type="CTD" id="42273"/>
<dbReference type="FlyBase" id="FBgn0022338">
    <property type="gene designation" value="dnk"/>
</dbReference>
<dbReference type="VEuPathDB" id="VectorBase:FBgn0022338"/>
<dbReference type="eggNOG" id="KOG4235">
    <property type="taxonomic scope" value="Eukaryota"/>
</dbReference>
<dbReference type="GeneTree" id="ENSGT00940000158005"/>
<dbReference type="HOGENOM" id="CLU_030466_1_0_1"/>
<dbReference type="InParanoid" id="Q9XZT6"/>
<dbReference type="OMA" id="MLDMHRR"/>
<dbReference type="OrthoDB" id="567086at2759"/>
<dbReference type="PhylomeDB" id="Q9XZT6"/>
<dbReference type="BioCyc" id="MetaCyc:MONOMER-17889"/>
<dbReference type="BRENDA" id="2.7.1.145">
    <property type="organism ID" value="1994"/>
</dbReference>
<dbReference type="Reactome" id="R-DME-73614">
    <property type="pathway name" value="Pyrimidine salvage"/>
</dbReference>
<dbReference type="SABIO-RK" id="Q9XZT6"/>
<dbReference type="BioGRID-ORCS" id="42273">
    <property type="hits" value="0 hits in 3 CRISPR screens"/>
</dbReference>
<dbReference type="EvolutionaryTrace" id="Q9XZT6"/>
<dbReference type="GenomeRNAi" id="42273"/>
<dbReference type="PRO" id="PR:Q9XZT6"/>
<dbReference type="Proteomes" id="UP000000803">
    <property type="component" value="Chromosome 3R"/>
</dbReference>
<dbReference type="Bgee" id="FBgn0022338">
    <property type="expression patterns" value="Expressed in cleaving embryo and 110 other cell types or tissues"/>
</dbReference>
<dbReference type="ExpressionAtlas" id="Q9XZT6">
    <property type="expression patterns" value="baseline and differential"/>
</dbReference>
<dbReference type="GO" id="GO:0005737">
    <property type="term" value="C:cytoplasm"/>
    <property type="evidence" value="ECO:0000314"/>
    <property type="project" value="FlyBase"/>
</dbReference>
<dbReference type="GO" id="GO:0005739">
    <property type="term" value="C:mitochondrion"/>
    <property type="evidence" value="ECO:0000318"/>
    <property type="project" value="GO_Central"/>
</dbReference>
<dbReference type="GO" id="GO:0005524">
    <property type="term" value="F:ATP binding"/>
    <property type="evidence" value="ECO:0007669"/>
    <property type="project" value="UniProtKB-KW"/>
</dbReference>
<dbReference type="GO" id="GO:0043771">
    <property type="term" value="F:cytidine kinase activity"/>
    <property type="evidence" value="ECO:0000314"/>
    <property type="project" value="FlyBase"/>
</dbReference>
<dbReference type="GO" id="GO:0004136">
    <property type="term" value="F:deoxyadenosine kinase activity"/>
    <property type="evidence" value="ECO:0000314"/>
    <property type="project" value="FlyBase"/>
</dbReference>
<dbReference type="GO" id="GO:0004137">
    <property type="term" value="F:deoxycytidine kinase activity"/>
    <property type="evidence" value="ECO:0000314"/>
    <property type="project" value="FlyBase"/>
</dbReference>
<dbReference type="GO" id="GO:0004138">
    <property type="term" value="F:deoxyguanosine kinase activity"/>
    <property type="evidence" value="ECO:0000314"/>
    <property type="project" value="FlyBase"/>
</dbReference>
<dbReference type="GO" id="GO:0019136">
    <property type="term" value="F:deoxynucleoside kinase activity"/>
    <property type="evidence" value="ECO:0000314"/>
    <property type="project" value="UniProtKB"/>
</dbReference>
<dbReference type="GO" id="GO:0016301">
    <property type="term" value="F:kinase activity"/>
    <property type="evidence" value="ECO:0000314"/>
    <property type="project" value="FlyBase"/>
</dbReference>
<dbReference type="GO" id="GO:0004797">
    <property type="term" value="F:thymidine kinase activity"/>
    <property type="evidence" value="ECO:0000314"/>
    <property type="project" value="FlyBase"/>
</dbReference>
<dbReference type="GO" id="GO:0004849">
    <property type="term" value="F:uridine kinase activity"/>
    <property type="evidence" value="ECO:0000314"/>
    <property type="project" value="FlyBase"/>
</dbReference>
<dbReference type="GO" id="GO:0071897">
    <property type="term" value="P:DNA biosynthetic process"/>
    <property type="evidence" value="ECO:0007669"/>
    <property type="project" value="UniProtKB-KW"/>
</dbReference>
<dbReference type="GO" id="GO:1901293">
    <property type="term" value="P:nucleoside phosphate biosynthetic process"/>
    <property type="evidence" value="ECO:0000314"/>
    <property type="project" value="FlyBase"/>
</dbReference>
<dbReference type="GO" id="GO:0043174">
    <property type="term" value="P:nucleoside salvage"/>
    <property type="evidence" value="ECO:0000314"/>
    <property type="project" value="UniProtKB"/>
</dbReference>
<dbReference type="CDD" id="cd01673">
    <property type="entry name" value="dNK"/>
    <property type="match status" value="1"/>
</dbReference>
<dbReference type="FunFam" id="3.40.50.300:FF:001571">
    <property type="entry name" value="Deoxynucleoside kinase"/>
    <property type="match status" value="1"/>
</dbReference>
<dbReference type="Gene3D" id="3.40.50.300">
    <property type="entry name" value="P-loop containing nucleotide triphosphate hydrolases"/>
    <property type="match status" value="1"/>
</dbReference>
<dbReference type="InterPro" id="IPR002624">
    <property type="entry name" value="DCK/DGK"/>
</dbReference>
<dbReference type="InterPro" id="IPR050566">
    <property type="entry name" value="Deoxyribonucleoside_kinase"/>
</dbReference>
<dbReference type="InterPro" id="IPR031314">
    <property type="entry name" value="DNK_dom"/>
</dbReference>
<dbReference type="InterPro" id="IPR027417">
    <property type="entry name" value="P-loop_NTPase"/>
</dbReference>
<dbReference type="PANTHER" id="PTHR10513">
    <property type="entry name" value="DEOXYNUCLEOSIDE KINASE"/>
    <property type="match status" value="1"/>
</dbReference>
<dbReference type="PANTHER" id="PTHR10513:SF24">
    <property type="entry name" value="THYMIDINE KINASE 2, MITOCHONDRIAL"/>
    <property type="match status" value="1"/>
</dbReference>
<dbReference type="Pfam" id="PF01712">
    <property type="entry name" value="dNK"/>
    <property type="match status" value="1"/>
</dbReference>
<dbReference type="PIRSF" id="PIRSF000705">
    <property type="entry name" value="DNK"/>
    <property type="match status" value="1"/>
</dbReference>
<dbReference type="SUPFAM" id="SSF52540">
    <property type="entry name" value="P-loop containing nucleoside triphosphate hydrolases"/>
    <property type="match status" value="1"/>
</dbReference>
<sequence length="250" mass="29088">MAEAASCARKGTKYAEGTQPFTVLIEGNIGSGKTTYLNHFEKYKNDICLLTEPVEKWRNVNGVNLLELMYKDPKKWAMPFQSYVTLTMLQSHTAPTNKKLKIMERSIFSARYCFVENMRRNGSLEQGMYNTLEEWYKFIEESIHVQADLIIYLRTSPEVAYERIRQRARSEESCVPLKYLQELHELHEDWLIHQRRPQSCKVLVLDADLNLENIGTEYQRSESSIFDAISSNQQPSPVLVSPSKRQRVAR</sequence>
<evidence type="ECO:0000250" key="1"/>
<evidence type="ECO:0000255" key="2"/>
<evidence type="ECO:0000269" key="3">
    <source>
    </source>
</evidence>
<evidence type="ECO:0000269" key="4">
    <source>
    </source>
</evidence>
<evidence type="ECO:0000269" key="5">
    <source>
    </source>
</evidence>
<evidence type="ECO:0000269" key="6">
    <source>
    </source>
</evidence>
<evidence type="ECO:0000269" key="7">
    <source>
    </source>
</evidence>
<evidence type="ECO:0000269" key="8">
    <source>
    </source>
</evidence>
<evidence type="ECO:0000305" key="9"/>
<evidence type="ECO:0007829" key="10">
    <source>
        <dbReference type="PDB" id="1J90"/>
    </source>
</evidence>
<evidence type="ECO:0007829" key="11">
    <source>
        <dbReference type="PDB" id="1ZM7"/>
    </source>
</evidence>
<evidence type="ECO:0007829" key="12">
    <source>
        <dbReference type="PDB" id="2VP4"/>
    </source>
</evidence>
<evidence type="ECO:0007829" key="13">
    <source>
        <dbReference type="PDB" id="2VP5"/>
    </source>
</evidence>
<evidence type="ECO:0007829" key="14">
    <source>
        <dbReference type="PDB" id="6YBH"/>
    </source>
</evidence>
<gene>
    <name type="primary">dnk</name>
    <name type="ORF">CG5452</name>
</gene>
<organism>
    <name type="scientific">Drosophila melanogaster</name>
    <name type="common">Fruit fly</name>
    <dbReference type="NCBI Taxonomy" id="7227"/>
    <lineage>
        <taxon>Eukaryota</taxon>
        <taxon>Metazoa</taxon>
        <taxon>Ecdysozoa</taxon>
        <taxon>Arthropoda</taxon>
        <taxon>Hexapoda</taxon>
        <taxon>Insecta</taxon>
        <taxon>Pterygota</taxon>
        <taxon>Neoptera</taxon>
        <taxon>Endopterygota</taxon>
        <taxon>Diptera</taxon>
        <taxon>Brachycera</taxon>
        <taxon>Muscomorpha</taxon>
        <taxon>Ephydroidea</taxon>
        <taxon>Drosophilidae</taxon>
        <taxon>Drosophila</taxon>
        <taxon>Sophophora</taxon>
    </lineage>
</organism>
<comment type="function">
    <text evidence="3 4 5">Deoxyribonucleoside kinase that has a broad specificity phosphorylating thymidine, 2'-deoxyriboadenosine, 2'-deoxyribocytidine and 2'-deoxyriboguanosine. Specificity is higher for pyrimidine nucleosides. Several anti-viral and anti-cancer nucleoside analogs are also efficiently phosphorylated.</text>
</comment>
<comment type="catalytic activity">
    <reaction evidence="3 4 5 8">
        <text>a 2'-deoxyribonucleoside + ATP = a 2'-deoxyribonucleoside 5'-phosphate + ADP + H(+)</text>
        <dbReference type="Rhea" id="RHEA:12140"/>
        <dbReference type="ChEBI" id="CHEBI:15378"/>
        <dbReference type="ChEBI" id="CHEBI:18274"/>
        <dbReference type="ChEBI" id="CHEBI:30616"/>
        <dbReference type="ChEBI" id="CHEBI:65317"/>
        <dbReference type="ChEBI" id="CHEBI:456216"/>
        <dbReference type="EC" id="2.7.1.145"/>
    </reaction>
</comment>
<comment type="activity regulation">
    <text evidence="5">Subject to feedback inhibition by dTTP.</text>
</comment>
<comment type="biophysicochemical properties">
    <kinetics>
        <KM evidence="3 4">0.9 uM for thymidine</KM>
        <KM evidence="3 4">1 uM for deoxycytidine</KM>
        <KM evidence="3 4">109 uM for deoxyadenosine</KM>
        <KM evidence="3 4">654 uM for deoxyguanosine</KM>
        <Vmax evidence="3 4">29.4 mmol/min/mg enzyme with thymidine as substrate</Vmax>
        <Vmax evidence="3 4">28.7 mmol/min/mg enzyme with deoxycytidine as substrate</Vmax>
        <Vmax evidence="3 4">35.5 mmol/min/mg enzyme with deoxyadenosine as substrate</Vmax>
        <Vmax evidence="3 4">37.7 mmol/min/mg enzyme with deoxyguanosine as substrate</Vmax>
    </kinetics>
</comment>
<comment type="subunit">
    <text evidence="8">Monomer.</text>
</comment>
<comment type="similarity">
    <text evidence="9">Belongs to the DCK/DGK family.</text>
</comment>
<feature type="chain" id="PRO_0000175097" description="Deoxynucleoside kinase">
    <location>
        <begin position="1"/>
        <end position="250"/>
    </location>
</feature>
<feature type="active site" description="Proton acceptor" evidence="2">
    <location>
        <position position="104"/>
    </location>
</feature>
<feature type="binding site" evidence="1">
    <location>
        <begin position="27"/>
        <end position="35"/>
    </location>
    <ligand>
        <name>ATP</name>
        <dbReference type="ChEBI" id="CHEBI:30616"/>
    </ligand>
</feature>
<feature type="binding site">
    <location>
        <position position="52"/>
    </location>
    <ligand>
        <name>substrate</name>
    </ligand>
</feature>
<feature type="binding site">
    <location>
        <position position="70"/>
    </location>
    <ligand>
        <name>substrate</name>
    </ligand>
</feature>
<feature type="binding site">
    <location>
        <position position="81"/>
    </location>
    <ligand>
        <name>substrate</name>
    </ligand>
</feature>
<feature type="binding site">
    <location>
        <position position="105"/>
    </location>
    <ligand>
        <name>substrate</name>
    </ligand>
</feature>
<feature type="binding site">
    <location>
        <position position="172"/>
    </location>
    <ligand>
        <name>substrate</name>
    </ligand>
</feature>
<feature type="modified residue" description="Phosphoserine" evidence="7">
    <location>
        <position position="236"/>
    </location>
</feature>
<feature type="modified residue" description="Phosphoserine" evidence="6">
    <location>
        <position position="241"/>
    </location>
</feature>
<feature type="modified residue" description="Phosphoserine" evidence="7">
    <location>
        <position position="243"/>
    </location>
</feature>
<feature type="mutagenesis site" description="Reduces enzyme activity towards dA, dG, dT and dC about 5-fold." evidence="5">
    <original>N</original>
    <variation>D</variation>
    <location>
        <position position="45"/>
    </location>
</feature>
<feature type="mutagenesis site" description="Reduces enzyme activity towards dT and dC about 500-fold. Reduces enzyme activity towards dG about 3900-fold. Reduces enzyme activity towards dA about 900-fold." evidence="5">
    <original>N</original>
    <variation>D</variation>
    <location>
        <position position="64"/>
    </location>
</feature>
<feature type="turn" evidence="11">
    <location>
        <begin position="15"/>
        <end position="17"/>
    </location>
</feature>
<feature type="strand" evidence="11">
    <location>
        <begin position="21"/>
        <end position="28"/>
    </location>
</feature>
<feature type="helix" evidence="11">
    <location>
        <begin position="33"/>
        <end position="38"/>
    </location>
</feature>
<feature type="helix" evidence="11">
    <location>
        <begin position="39"/>
        <end position="43"/>
    </location>
</feature>
<feature type="turn" evidence="11">
    <location>
        <begin position="44"/>
        <end position="46"/>
    </location>
</feature>
<feature type="strand" evidence="11">
    <location>
        <begin position="47"/>
        <end position="50"/>
    </location>
</feature>
<feature type="helix" evidence="11">
    <location>
        <begin position="54"/>
        <end position="57"/>
    </location>
</feature>
<feature type="strand" evidence="13">
    <location>
        <begin position="60"/>
        <end position="62"/>
    </location>
</feature>
<feature type="helix" evidence="11">
    <location>
        <begin position="65"/>
        <end position="71"/>
    </location>
</feature>
<feature type="helix" evidence="11">
    <location>
        <begin position="73"/>
        <end position="93"/>
    </location>
</feature>
<feature type="strand" evidence="11">
    <location>
        <begin position="98"/>
        <end position="105"/>
    </location>
</feature>
<feature type="helix" evidence="11">
    <location>
        <begin position="107"/>
        <end position="112"/>
    </location>
</feature>
<feature type="helix" evidence="11">
    <location>
        <begin position="114"/>
        <end position="120"/>
    </location>
</feature>
<feature type="strand" evidence="12">
    <location>
        <begin position="122"/>
        <end position="124"/>
    </location>
</feature>
<feature type="helix" evidence="11">
    <location>
        <begin position="126"/>
        <end position="142"/>
    </location>
</feature>
<feature type="strand" evidence="11">
    <location>
        <begin position="148"/>
        <end position="154"/>
    </location>
</feature>
<feature type="helix" evidence="11">
    <location>
        <begin position="157"/>
        <end position="167"/>
    </location>
</feature>
<feature type="helix" evidence="11">
    <location>
        <begin position="170"/>
        <end position="172"/>
    </location>
</feature>
<feature type="helix" evidence="11">
    <location>
        <begin position="177"/>
        <end position="191"/>
    </location>
</feature>
<feature type="turn" evidence="10">
    <location>
        <begin position="192"/>
        <end position="194"/>
    </location>
</feature>
<feature type="strand" evidence="11">
    <location>
        <begin position="200"/>
        <end position="206"/>
    </location>
</feature>
<feature type="turn" evidence="14">
    <location>
        <begin position="212"/>
        <end position="217"/>
    </location>
</feature>
<feature type="helix" evidence="14">
    <location>
        <begin position="224"/>
        <end position="226"/>
    </location>
</feature>
<reference key="1">
    <citation type="journal article" date="1999" name="J. Biol. Chem.">
        <title>Cloning and characterization of the multisubstrate deoxyribonucleoside kinase of Drosophila melanogaster.</title>
        <authorList>
            <person name="Johansson M."/>
            <person name="Van Rompay A.R."/>
            <person name="Degreve B."/>
            <person name="Balzarini J."/>
            <person name="Karlsson A."/>
        </authorList>
    </citation>
    <scope>NUCLEOTIDE SEQUENCE [MRNA]</scope>
    <scope>FUNCTION</scope>
    <scope>CATALYTIC ACTIVITY</scope>
    <scope>BIOPHYSICOCHEMICAL PROPERTIES</scope>
    <scope>CHARACTERIZATION</scope>
</reference>
<reference key="2">
    <citation type="journal article" date="2000" name="J. Biol. Chem.">
        <title>Functional expression of a multisubstrate deoxyribonucleoside kinase from Drosophila melanogaster and its C-terminal deletion mutants.</title>
        <authorList>
            <person name="Munch-Petersen B."/>
            <person name="Knecht W."/>
            <person name="Lenz C."/>
            <person name="Sondergaard L."/>
            <person name="Piskur J."/>
        </authorList>
    </citation>
    <scope>NUCLEOTIDE SEQUENCE [GENOMIC DNA / MRNA]</scope>
    <scope>FUNCTION</scope>
    <scope>CATALYTIC ACTIVITY</scope>
    <scope>BIOPHYSICOCHEMICAL PROPERTIES</scope>
    <scope>CHARACTERIZATION</scope>
    <source>
        <strain>Oregon-R</strain>
    </source>
</reference>
<reference key="3">
    <citation type="journal article" date="2000" name="Science">
        <title>The genome sequence of Drosophila melanogaster.</title>
        <authorList>
            <person name="Adams M.D."/>
            <person name="Celniker S.E."/>
            <person name="Holt R.A."/>
            <person name="Evans C.A."/>
            <person name="Gocayne J.D."/>
            <person name="Amanatides P.G."/>
            <person name="Scherer S.E."/>
            <person name="Li P.W."/>
            <person name="Hoskins R.A."/>
            <person name="Galle R.F."/>
            <person name="George R.A."/>
            <person name="Lewis S.E."/>
            <person name="Richards S."/>
            <person name="Ashburner M."/>
            <person name="Henderson S.N."/>
            <person name="Sutton G.G."/>
            <person name="Wortman J.R."/>
            <person name="Yandell M.D."/>
            <person name="Zhang Q."/>
            <person name="Chen L.X."/>
            <person name="Brandon R.C."/>
            <person name="Rogers Y.-H.C."/>
            <person name="Blazej R.G."/>
            <person name="Champe M."/>
            <person name="Pfeiffer B.D."/>
            <person name="Wan K.H."/>
            <person name="Doyle C."/>
            <person name="Baxter E.G."/>
            <person name="Helt G."/>
            <person name="Nelson C.R."/>
            <person name="Miklos G.L.G."/>
            <person name="Abril J.F."/>
            <person name="Agbayani A."/>
            <person name="An H.-J."/>
            <person name="Andrews-Pfannkoch C."/>
            <person name="Baldwin D."/>
            <person name="Ballew R.M."/>
            <person name="Basu A."/>
            <person name="Baxendale J."/>
            <person name="Bayraktaroglu L."/>
            <person name="Beasley E.M."/>
            <person name="Beeson K.Y."/>
            <person name="Benos P.V."/>
            <person name="Berman B.P."/>
            <person name="Bhandari D."/>
            <person name="Bolshakov S."/>
            <person name="Borkova D."/>
            <person name="Botchan M.R."/>
            <person name="Bouck J."/>
            <person name="Brokstein P."/>
            <person name="Brottier P."/>
            <person name="Burtis K.C."/>
            <person name="Busam D.A."/>
            <person name="Butler H."/>
            <person name="Cadieu E."/>
            <person name="Center A."/>
            <person name="Chandra I."/>
            <person name="Cherry J.M."/>
            <person name="Cawley S."/>
            <person name="Dahlke C."/>
            <person name="Davenport L.B."/>
            <person name="Davies P."/>
            <person name="de Pablos B."/>
            <person name="Delcher A."/>
            <person name="Deng Z."/>
            <person name="Mays A.D."/>
            <person name="Dew I."/>
            <person name="Dietz S.M."/>
            <person name="Dodson K."/>
            <person name="Doup L.E."/>
            <person name="Downes M."/>
            <person name="Dugan-Rocha S."/>
            <person name="Dunkov B.C."/>
            <person name="Dunn P."/>
            <person name="Durbin K.J."/>
            <person name="Evangelista C.C."/>
            <person name="Ferraz C."/>
            <person name="Ferriera S."/>
            <person name="Fleischmann W."/>
            <person name="Fosler C."/>
            <person name="Gabrielian A.E."/>
            <person name="Garg N.S."/>
            <person name="Gelbart W.M."/>
            <person name="Glasser K."/>
            <person name="Glodek A."/>
            <person name="Gong F."/>
            <person name="Gorrell J.H."/>
            <person name="Gu Z."/>
            <person name="Guan P."/>
            <person name="Harris M."/>
            <person name="Harris N.L."/>
            <person name="Harvey D.A."/>
            <person name="Heiman T.J."/>
            <person name="Hernandez J.R."/>
            <person name="Houck J."/>
            <person name="Hostin D."/>
            <person name="Houston K.A."/>
            <person name="Howland T.J."/>
            <person name="Wei M.-H."/>
            <person name="Ibegwam C."/>
            <person name="Jalali M."/>
            <person name="Kalush F."/>
            <person name="Karpen G.H."/>
            <person name="Ke Z."/>
            <person name="Kennison J.A."/>
            <person name="Ketchum K.A."/>
            <person name="Kimmel B.E."/>
            <person name="Kodira C.D."/>
            <person name="Kraft C.L."/>
            <person name="Kravitz S."/>
            <person name="Kulp D."/>
            <person name="Lai Z."/>
            <person name="Lasko P."/>
            <person name="Lei Y."/>
            <person name="Levitsky A.A."/>
            <person name="Li J.H."/>
            <person name="Li Z."/>
            <person name="Liang Y."/>
            <person name="Lin X."/>
            <person name="Liu X."/>
            <person name="Mattei B."/>
            <person name="McIntosh T.C."/>
            <person name="McLeod M.P."/>
            <person name="McPherson D."/>
            <person name="Merkulov G."/>
            <person name="Milshina N.V."/>
            <person name="Mobarry C."/>
            <person name="Morris J."/>
            <person name="Moshrefi A."/>
            <person name="Mount S.M."/>
            <person name="Moy M."/>
            <person name="Murphy B."/>
            <person name="Murphy L."/>
            <person name="Muzny D.M."/>
            <person name="Nelson D.L."/>
            <person name="Nelson D.R."/>
            <person name="Nelson K.A."/>
            <person name="Nixon K."/>
            <person name="Nusskern D.R."/>
            <person name="Pacleb J.M."/>
            <person name="Palazzolo M."/>
            <person name="Pittman G.S."/>
            <person name="Pan S."/>
            <person name="Pollard J."/>
            <person name="Puri V."/>
            <person name="Reese M.G."/>
            <person name="Reinert K."/>
            <person name="Remington K."/>
            <person name="Saunders R.D.C."/>
            <person name="Scheeler F."/>
            <person name="Shen H."/>
            <person name="Shue B.C."/>
            <person name="Siden-Kiamos I."/>
            <person name="Simpson M."/>
            <person name="Skupski M.P."/>
            <person name="Smith T.J."/>
            <person name="Spier E."/>
            <person name="Spradling A.C."/>
            <person name="Stapleton M."/>
            <person name="Strong R."/>
            <person name="Sun E."/>
            <person name="Svirskas R."/>
            <person name="Tector C."/>
            <person name="Turner R."/>
            <person name="Venter E."/>
            <person name="Wang A.H."/>
            <person name="Wang X."/>
            <person name="Wang Z.-Y."/>
            <person name="Wassarman D.A."/>
            <person name="Weinstock G.M."/>
            <person name="Weissenbach J."/>
            <person name="Williams S.M."/>
            <person name="Woodage T."/>
            <person name="Worley K.C."/>
            <person name="Wu D."/>
            <person name="Yang S."/>
            <person name="Yao Q.A."/>
            <person name="Ye J."/>
            <person name="Yeh R.-F."/>
            <person name="Zaveri J.S."/>
            <person name="Zhan M."/>
            <person name="Zhang G."/>
            <person name="Zhao Q."/>
            <person name="Zheng L."/>
            <person name="Zheng X.H."/>
            <person name="Zhong F.N."/>
            <person name="Zhong W."/>
            <person name="Zhou X."/>
            <person name="Zhu S.C."/>
            <person name="Zhu X."/>
            <person name="Smith H.O."/>
            <person name="Gibbs R.A."/>
            <person name="Myers E.W."/>
            <person name="Rubin G.M."/>
            <person name="Venter J.C."/>
        </authorList>
    </citation>
    <scope>NUCLEOTIDE SEQUENCE [LARGE SCALE GENOMIC DNA]</scope>
    <source>
        <strain>Berkeley</strain>
    </source>
</reference>
<reference key="4">
    <citation type="journal article" date="2002" name="Genome Biol.">
        <title>Annotation of the Drosophila melanogaster euchromatic genome: a systematic review.</title>
        <authorList>
            <person name="Misra S."/>
            <person name="Crosby M.A."/>
            <person name="Mungall C.J."/>
            <person name="Matthews B.B."/>
            <person name="Campbell K.S."/>
            <person name="Hradecky P."/>
            <person name="Huang Y."/>
            <person name="Kaminker J.S."/>
            <person name="Millburn G.H."/>
            <person name="Prochnik S.E."/>
            <person name="Smith C.D."/>
            <person name="Tupy J.L."/>
            <person name="Whitfield E.J."/>
            <person name="Bayraktaroglu L."/>
            <person name="Berman B.P."/>
            <person name="Bettencourt B.R."/>
            <person name="Celniker S.E."/>
            <person name="de Grey A.D.N.J."/>
            <person name="Drysdale R.A."/>
            <person name="Harris N.L."/>
            <person name="Richter J."/>
            <person name="Russo S."/>
            <person name="Schroeder A.J."/>
            <person name="Shu S.Q."/>
            <person name="Stapleton M."/>
            <person name="Yamada C."/>
            <person name="Ashburner M."/>
            <person name="Gelbart W.M."/>
            <person name="Rubin G.M."/>
            <person name="Lewis S.E."/>
        </authorList>
    </citation>
    <scope>GENOME REANNOTATION</scope>
    <source>
        <strain>Berkeley</strain>
    </source>
</reference>
<reference key="5">
    <citation type="journal article" date="1998" name="J. Biol. Chem.">
        <title>Four deoxynucleoside kinase activities from Drosophila melanogaster are contained within a single monomeric enzyme, a new multifunctional deoxynucleoside kinase.</title>
        <authorList>
            <person name="Munch-Petersen B."/>
            <person name="Piskur J."/>
            <person name="Sondergaard L."/>
        </authorList>
    </citation>
    <scope>ENZYME ACTIVITY</scope>
    <scope>SUBUNIT</scope>
</reference>
<reference key="6">
    <citation type="journal article" date="2007" name="Mol. Biosyst.">
        <title>An integrated chemical, mass spectrometric and computational strategy for (quantitative) phosphoproteomics: application to Drosophila melanogaster Kc167 cells.</title>
        <authorList>
            <person name="Bodenmiller B."/>
            <person name="Mueller L.N."/>
            <person name="Pedrioli P.G.A."/>
            <person name="Pflieger D."/>
            <person name="Juenger M.A."/>
            <person name="Eng J.K."/>
            <person name="Aebersold R."/>
            <person name="Tao W.A."/>
        </authorList>
    </citation>
    <scope>PHOSPHORYLATION [LARGE SCALE ANALYSIS] AT SER-241</scope>
    <scope>IDENTIFICATION BY MASS SPECTROMETRY</scope>
</reference>
<reference key="7">
    <citation type="journal article" date="2008" name="J. Proteome Res.">
        <title>Phosphoproteome analysis of Drosophila melanogaster embryos.</title>
        <authorList>
            <person name="Zhai B."/>
            <person name="Villen J."/>
            <person name="Beausoleil S.A."/>
            <person name="Mintseris J."/>
            <person name="Gygi S.P."/>
        </authorList>
    </citation>
    <scope>PHOSPHORYLATION [LARGE SCALE ANALYSIS] AT SER-236 AND SER-243</scope>
    <scope>IDENTIFICATION BY MASS SPECTROMETRY</scope>
    <source>
        <tissue>Embryo</tissue>
    </source>
</reference>
<reference key="8">
    <citation type="journal article" date="2003" name="Biochemistry">
        <title>Structural basis for feedback inhibition of the deoxyribonucleoside salvage pathway: studies of the Drosophila deoxyribonucleoside kinase.</title>
        <authorList>
            <person name="Mikkelsen N.E."/>
            <person name="Johansson K."/>
            <person name="Karlsson A."/>
            <person name="Knecht W."/>
            <person name="Andersen G."/>
            <person name="Piskur J."/>
            <person name="Munch-Petersen B."/>
            <person name="Eklund H."/>
        </authorList>
    </citation>
    <scope>X-RAY CRYSTALLOGRAPHY (2.4 ANGSTROMS) OF 1-230 IN COMPLEXES WITH DEOXYTHIMIDINE AND DEOXY-TTP</scope>
</reference>
<reference key="9">
    <citation type="journal article" date="2005" name="FEBS J.">
        <title>Structural basis for the changed substrate specificity of Drosophila melanogaster deoxyribonucleoside kinase mutant N64D.</title>
        <authorList>
            <person name="Welin M."/>
            <person name="Skovgaard T."/>
            <person name="Knecht W."/>
            <person name="Zhu C."/>
            <person name="Berenstein D."/>
            <person name="Munch-Petersen B."/>
            <person name="Piskur J."/>
            <person name="Eklund H."/>
        </authorList>
    </citation>
    <scope>X-RAY CRYSTALLOGRAPHY (2.2 ANGSTROMS) OF 1-230 OF MUTANT ASP-45/ASP-64 IN COMPLEXES WITH THYMIDINE AND TTP</scope>
    <scope>FUNCTION</scope>
    <scope>CATALYTIC ACTIVITY</scope>
    <scope>MUTAGENESIS OF ASN-45 AND ASN-64</scope>
    <scope>ACTIVITY REGULATION</scope>
</reference>
<reference key="10">
    <citation type="journal article" date="2008" name="FEBS J.">
        <title>Structural studies of nucleoside analog and feedback inhibitor binding to Drosophila melanogaster multisubstrate deoxyribonucleoside kinase.</title>
        <authorList>
            <person name="Mikkelsen N.E."/>
            <person name="Munch-Petersen B."/>
            <person name="Eklund H."/>
        </authorList>
    </citation>
    <scope>X-RAY CRYSTALLOGRAPHY (2.2 ANGSTROMS) IN COMPLEXES WITH DEOXY-CTP; DEOXY-GTP; DEOXY-TTP; FLOXURIDINE; AZIDO-DIDEOXYTHYMIDINE; DIDEOXYCYTIDINE AND BRIVUDINE</scope>
</reference>
<accession>Q9XZT6</accession>
<name>DNK_DROME</name>
<protein>
    <recommendedName>
        <fullName>Deoxynucleoside kinase</fullName>
        <ecNumber evidence="3 4 5 8">2.7.1.145</ecNumber>
    </recommendedName>
    <alternativeName>
        <fullName>Deoxyribonucleoside kinase</fullName>
        <shortName>Dm-dNK</shortName>
    </alternativeName>
    <alternativeName>
        <fullName>Multispecific deoxynucleoside kinase</fullName>
    </alternativeName>
</protein>